<protein>
    <recommendedName>
        <fullName>Glutamine synthetase PR-1</fullName>
        <ecNumber>6.3.1.2</ecNumber>
    </recommendedName>
    <alternativeName>
        <fullName>Gln isozyme beta</fullName>
    </alternativeName>
    <alternativeName>
        <fullName>Glutamate--ammonia ligase</fullName>
    </alternativeName>
</protein>
<organism>
    <name type="scientific">Phaseolus vulgaris</name>
    <name type="common">Kidney bean</name>
    <name type="synonym">French bean</name>
    <dbReference type="NCBI Taxonomy" id="3885"/>
    <lineage>
        <taxon>Eukaryota</taxon>
        <taxon>Viridiplantae</taxon>
        <taxon>Streptophyta</taxon>
        <taxon>Embryophyta</taxon>
        <taxon>Tracheophyta</taxon>
        <taxon>Spermatophyta</taxon>
        <taxon>Magnoliopsida</taxon>
        <taxon>eudicotyledons</taxon>
        <taxon>Gunneridae</taxon>
        <taxon>Pentapetalae</taxon>
        <taxon>rosids</taxon>
        <taxon>fabids</taxon>
        <taxon>Fabales</taxon>
        <taxon>Fabaceae</taxon>
        <taxon>Papilionoideae</taxon>
        <taxon>50 kb inversion clade</taxon>
        <taxon>NPAAA clade</taxon>
        <taxon>indigoferoid/millettioid clade</taxon>
        <taxon>Phaseoleae</taxon>
        <taxon>Phaseolus</taxon>
    </lineage>
</organism>
<sequence>MSLLSDLINLNLSDTTEKVIAEYIWIGGSGLDLRSKARTLPGPVKNPSELPKWNYDGSSTGQAPGQDSEVIIYPQAIFKDPFRRGNNILVICDAYTPAGEPIPTNKRHNAAKIFSNPDVVAEEPWYGIEQEYTLLQKEVNWPVGWPVGGFPGPQGPYYCGVGADKAFGRDIVDAHYKACVYAGINISGINGEVMPGQWEFQVGPAVGISAGDELWVARYILERITEVAGVVLSFDPKPIKGDWNGAGAHTNYSTKTMRNDGGYEEIKSAIQKLGKRHKEHIAAYGEGNERRLTGRHETADINTFLWGVANRGASIRVGRDTEKAGKGYFEDRRPASNMDPYVVTSMIADTTILWKP</sequence>
<dbReference type="EC" id="6.3.1.2"/>
<dbReference type="EMBL" id="X04001">
    <property type="protein sequence ID" value="CAA27631.1"/>
    <property type="molecule type" value="mRNA"/>
</dbReference>
<dbReference type="PIR" id="A26308">
    <property type="entry name" value="AJFBQB"/>
</dbReference>
<dbReference type="SMR" id="P04770"/>
<dbReference type="ProMEX" id="P04770"/>
<dbReference type="eggNOG" id="KOG0683">
    <property type="taxonomic scope" value="Eukaryota"/>
</dbReference>
<dbReference type="GO" id="GO:0005737">
    <property type="term" value="C:cytoplasm"/>
    <property type="evidence" value="ECO:0007669"/>
    <property type="project" value="UniProtKB-SubCell"/>
</dbReference>
<dbReference type="GO" id="GO:0005524">
    <property type="term" value="F:ATP binding"/>
    <property type="evidence" value="ECO:0007669"/>
    <property type="project" value="UniProtKB-KW"/>
</dbReference>
<dbReference type="GO" id="GO:0004356">
    <property type="term" value="F:glutamine synthetase activity"/>
    <property type="evidence" value="ECO:0007669"/>
    <property type="project" value="UniProtKB-EC"/>
</dbReference>
<dbReference type="GO" id="GO:0006542">
    <property type="term" value="P:glutamine biosynthetic process"/>
    <property type="evidence" value="ECO:0007669"/>
    <property type="project" value="InterPro"/>
</dbReference>
<dbReference type="FunFam" id="3.30.590.10:FF:000004">
    <property type="entry name" value="Glutamine synthetase"/>
    <property type="match status" value="1"/>
</dbReference>
<dbReference type="FunFam" id="3.10.20.70:FF:000003">
    <property type="entry name" value="Glutamine synthetase, chloroplastic"/>
    <property type="match status" value="1"/>
</dbReference>
<dbReference type="Gene3D" id="3.10.20.70">
    <property type="entry name" value="Glutamine synthetase, N-terminal domain"/>
    <property type="match status" value="1"/>
</dbReference>
<dbReference type="Gene3D" id="3.30.590.10">
    <property type="entry name" value="Glutamine synthetase/guanido kinase, catalytic domain"/>
    <property type="match status" value="1"/>
</dbReference>
<dbReference type="InterPro" id="IPR008147">
    <property type="entry name" value="Gln_synt_N"/>
</dbReference>
<dbReference type="InterPro" id="IPR036651">
    <property type="entry name" value="Gln_synt_N_sf"/>
</dbReference>
<dbReference type="InterPro" id="IPR014746">
    <property type="entry name" value="Gln_synth/guanido_kin_cat_dom"/>
</dbReference>
<dbReference type="InterPro" id="IPR008146">
    <property type="entry name" value="Gln_synth_cat_dom"/>
</dbReference>
<dbReference type="InterPro" id="IPR027303">
    <property type="entry name" value="Gln_synth_gly_rich_site"/>
</dbReference>
<dbReference type="InterPro" id="IPR027302">
    <property type="entry name" value="Gln_synth_N_conserv_site"/>
</dbReference>
<dbReference type="InterPro" id="IPR050292">
    <property type="entry name" value="Glutamine_Synthetase"/>
</dbReference>
<dbReference type="PANTHER" id="PTHR20852">
    <property type="entry name" value="GLUTAMINE SYNTHETASE"/>
    <property type="match status" value="1"/>
</dbReference>
<dbReference type="PANTHER" id="PTHR20852:SF93">
    <property type="entry name" value="GLUTAMINE SYNTHETASE CYTOSOLIC ISOZYME 1-1"/>
    <property type="match status" value="1"/>
</dbReference>
<dbReference type="Pfam" id="PF00120">
    <property type="entry name" value="Gln-synt_C"/>
    <property type="match status" value="1"/>
</dbReference>
<dbReference type="SMART" id="SM01230">
    <property type="entry name" value="Gln-synt_C"/>
    <property type="match status" value="1"/>
</dbReference>
<dbReference type="SUPFAM" id="SSF54368">
    <property type="entry name" value="Glutamine synthetase, N-terminal domain"/>
    <property type="match status" value="1"/>
</dbReference>
<dbReference type="SUPFAM" id="SSF55931">
    <property type="entry name" value="Glutamine synthetase/guanido kinase"/>
    <property type="match status" value="1"/>
</dbReference>
<dbReference type="PROSITE" id="PS00180">
    <property type="entry name" value="GLNA_1"/>
    <property type="match status" value="1"/>
</dbReference>
<dbReference type="PROSITE" id="PS00181">
    <property type="entry name" value="GLNA_ATP"/>
    <property type="match status" value="1"/>
</dbReference>
<dbReference type="PROSITE" id="PS51986">
    <property type="entry name" value="GS_BETA_GRASP"/>
    <property type="match status" value="1"/>
</dbReference>
<dbReference type="PROSITE" id="PS51987">
    <property type="entry name" value="GS_CATALYTIC"/>
    <property type="match status" value="1"/>
</dbReference>
<evidence type="ECO:0000255" key="1">
    <source>
        <dbReference type="PROSITE-ProRule" id="PRU01330"/>
    </source>
</evidence>
<evidence type="ECO:0000255" key="2">
    <source>
        <dbReference type="PROSITE-ProRule" id="PRU01331"/>
    </source>
</evidence>
<evidence type="ECO:0000256" key="3">
    <source>
        <dbReference type="SAM" id="MobiDB-lite"/>
    </source>
</evidence>
<evidence type="ECO:0000305" key="4"/>
<keyword id="KW-0067">ATP-binding</keyword>
<keyword id="KW-0963">Cytoplasm</keyword>
<keyword id="KW-0436">Ligase</keyword>
<keyword id="KW-0535">Nitrogen fixation</keyword>
<keyword id="KW-0547">Nucleotide-binding</keyword>
<feature type="chain" id="PRO_0000153191" description="Glutamine synthetase PR-1">
    <location>
        <begin position="1"/>
        <end position="356"/>
    </location>
</feature>
<feature type="domain" description="GS beta-grasp" evidence="1">
    <location>
        <begin position="19"/>
        <end position="99"/>
    </location>
</feature>
<feature type="domain" description="GS catalytic" evidence="2">
    <location>
        <begin position="106"/>
        <end position="356"/>
    </location>
</feature>
<feature type="region of interest" description="Disordered" evidence="3">
    <location>
        <begin position="41"/>
        <end position="64"/>
    </location>
</feature>
<accession>P04770</accession>
<proteinExistence type="evidence at transcript level"/>
<reference key="1">
    <citation type="journal article" date="1986" name="EMBO J.">
        <title>Primary structure and differential expression of glutamine synthetase genes in nodules, roots and leaves of Phaseolus vulgaris.</title>
        <authorList>
            <person name="Gebhardt C."/>
            <person name="Oliver J.E."/>
            <person name="Forde B.G."/>
            <person name="Saarelainen R."/>
            <person name="Miflin B.J."/>
        </authorList>
    </citation>
    <scope>NUCLEOTIDE SEQUENCE [MRNA]</scope>
</reference>
<comment type="catalytic activity">
    <reaction>
        <text>L-glutamate + NH4(+) + ATP = L-glutamine + ADP + phosphate + H(+)</text>
        <dbReference type="Rhea" id="RHEA:16169"/>
        <dbReference type="ChEBI" id="CHEBI:15378"/>
        <dbReference type="ChEBI" id="CHEBI:28938"/>
        <dbReference type="ChEBI" id="CHEBI:29985"/>
        <dbReference type="ChEBI" id="CHEBI:30616"/>
        <dbReference type="ChEBI" id="CHEBI:43474"/>
        <dbReference type="ChEBI" id="CHEBI:58359"/>
        <dbReference type="ChEBI" id="CHEBI:456216"/>
        <dbReference type="EC" id="6.3.1.2"/>
    </reaction>
</comment>
<comment type="subunit">
    <text>Homooctamer.</text>
</comment>
<comment type="subcellular location">
    <subcellularLocation>
        <location>Cytoplasm</location>
    </subcellularLocation>
</comment>
<comment type="tissue specificity">
    <text>Roots.</text>
</comment>
<comment type="miscellaneous">
    <text>There are at least four isozymes of this enzyme in P.vulgaris.</text>
</comment>
<comment type="miscellaneous">
    <text>Irreversibly inhibited by the herbicide L-phosphinothricin (PPT).</text>
</comment>
<comment type="similarity">
    <text evidence="4">Belongs to the glutamine synthetase family.</text>
</comment>
<name>GLNA1_PHAVU</name>